<sequence length="887" mass="98333">MCAALRRNLLLRSLWVVLAIGTAQVQAASPRWEPQIAVLCEAGQIYQPQYLSEEGRWVTDLSKKTTGPTCLRDKMDLLDYCKKAYPNRDITNIVESSHYQKIGGWCRQGALNAAKCKGSHRWIKPFRCLGPFQSDALLVPEGCLFDHIHNASRCWPFVRWNQTGAAACQERGMQMRSFAMLLPCGISVFSGVEFVCCPKHFKTDEIHVKKTDLPVMPAAQINSANDELVMNDEDDSNDSNYSKDANEDDLDDEDDLMGDDEEDDMVADEAATAGGSPNTGSSGDSNSGSLDDINAEYDSGEEGDNYEEDGAGSESEAEVEASWDQSGGAKVVSLKSDSSSPSSAPVAPAPEKAPVKSESVTSTPQLSASAAAFVAANSGNSGTGAGAPPSTAQPTSDPYFTHFDPHYEHQSYKVSQKRLEESHREKVTRVMKDWSDLEEKYQDMRLADPKAAQSFKQRMTARFQTSVQALEEEGNAEKHQLAAMHQQRVLAHINQRKREAMTCYTQALTEQPPNAHHVEKCLQKLLRALHKDRAHALAHYRHLLNSGGPGGLEAAASERPRTLERLIDIDRAVNQSMTMLKRYPELSAKIAQLMNDYILALRSKDDIPGSSLGMSEEAEAGILDKYRVEIERKVAEKERLRLAEKQRKEQRAAEREKLREEKLRLEAKKVDDMLKSQVAEQQSQPTQSSTQSQAQQQQQEKSLPGKELGPDAALVTAANPNLETTKSEKDLSDTEYGEATVSSTKVQTVLPTVDDDAVQRAVEDVAAAVAHQEAEPQVQHFMTHDLGHRESSFSLRREFAQHAHAAKEGRNVYFTLSFAGIALMAAVFVGVAVAKWRTSRSPHAQGFIEVDQNVTTHHPIVREEKIVPNMQINGYENPTYKYFEVKE</sequence>
<name>A4_DROME</name>
<protein>
    <recommendedName>
        <fullName>Amyloid-beta-like protein</fullName>
    </recommendedName>
</protein>
<accession>P14599</accession>
<accession>Q9TVV0</accession>
<accession>Q9U4H3</accession>
<accession>Q9W5F1</accession>
<organism>
    <name type="scientific">Drosophila melanogaster</name>
    <name type="common">Fruit fly</name>
    <dbReference type="NCBI Taxonomy" id="7227"/>
    <lineage>
        <taxon>Eukaryota</taxon>
        <taxon>Metazoa</taxon>
        <taxon>Ecdysozoa</taxon>
        <taxon>Arthropoda</taxon>
        <taxon>Hexapoda</taxon>
        <taxon>Insecta</taxon>
        <taxon>Pterygota</taxon>
        <taxon>Neoptera</taxon>
        <taxon>Endopterygota</taxon>
        <taxon>Diptera</taxon>
        <taxon>Brachycera</taxon>
        <taxon>Muscomorpha</taxon>
        <taxon>Ephydroidea</taxon>
        <taxon>Drosophilidae</taxon>
        <taxon>Drosophila</taxon>
        <taxon>Sophophora</taxon>
    </lineage>
</organism>
<dbReference type="EMBL" id="J04516">
    <property type="protein sequence ID" value="AAA28874.1"/>
    <property type="molecule type" value="Genomic_DNA"/>
</dbReference>
<dbReference type="EMBL" id="AE014298">
    <property type="protein sequence ID" value="AAF45520.2"/>
    <property type="molecule type" value="Genomic_DNA"/>
</dbReference>
<dbReference type="EMBL" id="AL031883">
    <property type="protein sequence ID" value="CAA21409.1"/>
    <property type="molecule type" value="Genomic_DNA"/>
</dbReference>
<dbReference type="EMBL" id="AL022139">
    <property type="protein sequence ID" value="CAA21409.1"/>
    <property type="status" value="JOINED"/>
    <property type="molecule type" value="Genomic_DNA"/>
</dbReference>
<dbReference type="EMBL" id="AL022139">
    <property type="protein sequence ID" value="CAA18093.1"/>
    <property type="molecule type" value="Genomic_DNA"/>
</dbReference>
<dbReference type="EMBL" id="AL031883">
    <property type="protein sequence ID" value="CAA18093.1"/>
    <property type="status" value="JOINED"/>
    <property type="molecule type" value="Genomic_DNA"/>
</dbReference>
<dbReference type="EMBL" id="AF181628">
    <property type="protein sequence ID" value="AAD55414.1"/>
    <property type="molecule type" value="mRNA"/>
</dbReference>
<dbReference type="EMBL" id="X55774">
    <property type="protein sequence ID" value="CAA39294.1"/>
    <property type="molecule type" value="Genomic_DNA"/>
</dbReference>
<dbReference type="EMBL" id="X55775">
    <property type="protein sequence ID" value="CAA39294.1"/>
    <property type="status" value="JOINED"/>
    <property type="molecule type" value="Genomic_DNA"/>
</dbReference>
<dbReference type="PIR" id="A32758">
    <property type="entry name" value="A32758"/>
</dbReference>
<dbReference type="RefSeq" id="NP_476626.2">
    <property type="nucleotide sequence ID" value="NM_057278.5"/>
</dbReference>
<dbReference type="SMR" id="P14599"/>
<dbReference type="BioGRID" id="57571">
    <property type="interactions" value="22"/>
</dbReference>
<dbReference type="FunCoup" id="P14599">
    <property type="interactions" value="399"/>
</dbReference>
<dbReference type="IntAct" id="P14599">
    <property type="interactions" value="12"/>
</dbReference>
<dbReference type="STRING" id="7227.FBpp0298292"/>
<dbReference type="GlyCosmos" id="P14599">
    <property type="glycosylation" value="5 sites, No reported glycans"/>
</dbReference>
<dbReference type="GlyGen" id="P14599">
    <property type="glycosylation" value="5 sites"/>
</dbReference>
<dbReference type="PaxDb" id="7227-FBpp0298292"/>
<dbReference type="EnsemblMetazoa" id="FBtr0070109">
    <property type="protein sequence ID" value="FBpp0070104"/>
    <property type="gene ID" value="FBgn0000108"/>
</dbReference>
<dbReference type="GeneID" id="31002"/>
<dbReference type="KEGG" id="dme:Dmel_CG7727"/>
<dbReference type="AGR" id="FB:FBgn0000108"/>
<dbReference type="CTD" id="31002"/>
<dbReference type="FlyBase" id="FBgn0000108">
    <property type="gene designation" value="Appl"/>
</dbReference>
<dbReference type="VEuPathDB" id="VectorBase:FBgn0000108"/>
<dbReference type="eggNOG" id="KOG3540">
    <property type="taxonomic scope" value="Eukaryota"/>
</dbReference>
<dbReference type="GeneTree" id="ENSGT00530000063252"/>
<dbReference type="InParanoid" id="P14599"/>
<dbReference type="OrthoDB" id="6147836at2759"/>
<dbReference type="PhylomeDB" id="P14599"/>
<dbReference type="Reactome" id="R-DME-114608">
    <property type="pathway name" value="Platelet degranulation"/>
</dbReference>
<dbReference type="Reactome" id="R-DME-3000178">
    <property type="pathway name" value="ECM proteoglycans"/>
</dbReference>
<dbReference type="Reactome" id="R-DME-381426">
    <property type="pathway name" value="Regulation of Insulin-like Growth Factor (IGF) transport and uptake by Insulin-like Growth Factor Binding Proteins (IGFBPs)"/>
</dbReference>
<dbReference type="Reactome" id="R-DME-416476">
    <property type="pathway name" value="G alpha (q) signalling events"/>
</dbReference>
<dbReference type="Reactome" id="R-DME-8957275">
    <property type="pathway name" value="Post-translational protein phosphorylation"/>
</dbReference>
<dbReference type="Reactome" id="R-DME-9609523">
    <property type="pathway name" value="Insertion of tail-anchored proteins into the endoplasmic reticulum membrane"/>
</dbReference>
<dbReference type="Reactome" id="R-DME-9837999">
    <property type="pathway name" value="Mitochondrial protein degradation"/>
</dbReference>
<dbReference type="SignaLink" id="P14599"/>
<dbReference type="BioGRID-ORCS" id="31002">
    <property type="hits" value="0 hits in 3 CRISPR screens"/>
</dbReference>
<dbReference type="ChiTaRS" id="Appl">
    <property type="organism name" value="fly"/>
</dbReference>
<dbReference type="GenomeRNAi" id="31002"/>
<dbReference type="PRO" id="PR:P14599"/>
<dbReference type="Proteomes" id="UP000000803">
    <property type="component" value="Chromosome X"/>
</dbReference>
<dbReference type="Bgee" id="FBgn0000108">
    <property type="expression patterns" value="Expressed in alpha'/beta' Kenyon cell (Drosophila) in insect head and 214 other cell types or tissues"/>
</dbReference>
<dbReference type="ExpressionAtlas" id="P14599">
    <property type="expression patterns" value="baseline and differential"/>
</dbReference>
<dbReference type="GO" id="GO:0030424">
    <property type="term" value="C:axon"/>
    <property type="evidence" value="ECO:0000314"/>
    <property type="project" value="FlyBase"/>
</dbReference>
<dbReference type="GO" id="GO:0005576">
    <property type="term" value="C:extracellular region"/>
    <property type="evidence" value="ECO:0000314"/>
    <property type="project" value="FlyBase"/>
</dbReference>
<dbReference type="GO" id="GO:0043005">
    <property type="term" value="C:neuron projection"/>
    <property type="evidence" value="ECO:0000318"/>
    <property type="project" value="GO_Central"/>
</dbReference>
<dbReference type="GO" id="GO:0043025">
    <property type="term" value="C:neuronal cell body"/>
    <property type="evidence" value="ECO:0000314"/>
    <property type="project" value="FlyBase"/>
</dbReference>
<dbReference type="GO" id="GO:0005886">
    <property type="term" value="C:plasma membrane"/>
    <property type="evidence" value="ECO:0000314"/>
    <property type="project" value="FlyBase"/>
</dbReference>
<dbReference type="GO" id="GO:0008201">
    <property type="term" value="F:heparin binding"/>
    <property type="evidence" value="ECO:0007669"/>
    <property type="project" value="InterPro"/>
</dbReference>
<dbReference type="GO" id="GO:0046914">
    <property type="term" value="F:transition metal ion binding"/>
    <property type="evidence" value="ECO:0007669"/>
    <property type="project" value="InterPro"/>
</dbReference>
<dbReference type="GO" id="GO:0007409">
    <property type="term" value="P:axonogenesis"/>
    <property type="evidence" value="ECO:0000318"/>
    <property type="project" value="GO_Central"/>
</dbReference>
<dbReference type="GO" id="GO:0007417">
    <property type="term" value="P:central nervous system development"/>
    <property type="evidence" value="ECO:0000318"/>
    <property type="project" value="GO_Central"/>
</dbReference>
<dbReference type="GO" id="GO:0007611">
    <property type="term" value="P:learning or memory"/>
    <property type="evidence" value="ECO:0000315"/>
    <property type="project" value="FlyBase"/>
</dbReference>
<dbReference type="GO" id="GO:0007616">
    <property type="term" value="P:long-term memory"/>
    <property type="evidence" value="ECO:0000314"/>
    <property type="project" value="FlyBase"/>
</dbReference>
<dbReference type="GO" id="GO:0016319">
    <property type="term" value="P:mushroom body development"/>
    <property type="evidence" value="ECO:0000315"/>
    <property type="project" value="FlyBase"/>
</dbReference>
<dbReference type="GO" id="GO:0048812">
    <property type="term" value="P:neuron projection morphogenesis"/>
    <property type="evidence" value="ECO:0000315"/>
    <property type="project" value="FlyBase"/>
</dbReference>
<dbReference type="GO" id="GO:0007422">
    <property type="term" value="P:peripheral nervous system development"/>
    <property type="evidence" value="ECO:0000315"/>
    <property type="project" value="FlyBase"/>
</dbReference>
<dbReference type="GO" id="GO:0048678">
    <property type="term" value="P:response to axon injury"/>
    <property type="evidence" value="ECO:0000315"/>
    <property type="project" value="FlyBase"/>
</dbReference>
<dbReference type="GO" id="GO:0051602">
    <property type="term" value="P:response to electrical stimulus"/>
    <property type="evidence" value="ECO:0000315"/>
    <property type="project" value="FlyBase"/>
</dbReference>
<dbReference type="GO" id="GO:0007614">
    <property type="term" value="P:short-term memory"/>
    <property type="evidence" value="ECO:0000315"/>
    <property type="project" value="FlyBase"/>
</dbReference>
<dbReference type="GO" id="GO:0050808">
    <property type="term" value="P:synapse organization"/>
    <property type="evidence" value="ECO:0000315"/>
    <property type="project" value="FlyBase"/>
</dbReference>
<dbReference type="FunFam" id="1.20.120.770:FF:000002">
    <property type="entry name" value="beta-amyloid-like protein isoform X1"/>
    <property type="match status" value="1"/>
</dbReference>
<dbReference type="FunFam" id="3.90.570.10:FF:000002">
    <property type="entry name" value="beta-amyloid-like protein isoform X5"/>
    <property type="match status" value="1"/>
</dbReference>
<dbReference type="Gene3D" id="1.20.120.770">
    <property type="entry name" value="Amyloid precursor protein, E2 domain"/>
    <property type="match status" value="1"/>
</dbReference>
<dbReference type="Gene3D" id="3.30.1490.140">
    <property type="entry name" value="Amyloidogenic glycoprotein, copper-binding domain"/>
    <property type="match status" value="1"/>
</dbReference>
<dbReference type="Gene3D" id="3.90.570.10">
    <property type="entry name" value="Amyloidogenic glycoprotein, heparin-binding domain"/>
    <property type="match status" value="1"/>
</dbReference>
<dbReference type="InterPro" id="IPR036669">
    <property type="entry name" value="Amyloid_Cu-bd_sf"/>
</dbReference>
<dbReference type="InterPro" id="IPR008155">
    <property type="entry name" value="Amyloid_glyco"/>
</dbReference>
<dbReference type="InterPro" id="IPR011178">
    <property type="entry name" value="Amyloid_glyco_Cu-bd"/>
</dbReference>
<dbReference type="InterPro" id="IPR024329">
    <property type="entry name" value="Amyloid_glyco_E2_domain"/>
</dbReference>
<dbReference type="InterPro" id="IPR008154">
    <property type="entry name" value="Amyloid_glyco_extra"/>
</dbReference>
<dbReference type="InterPro" id="IPR015849">
    <property type="entry name" value="Amyloid_glyco_heparin-bd"/>
</dbReference>
<dbReference type="InterPro" id="IPR036454">
    <property type="entry name" value="Amyloid_glyco_heparin-bd_sf"/>
</dbReference>
<dbReference type="InterPro" id="IPR019745">
    <property type="entry name" value="Amyloid_glyco_intracell_CS"/>
</dbReference>
<dbReference type="InterPro" id="IPR019543">
    <property type="entry name" value="APP_amyloid_C"/>
</dbReference>
<dbReference type="InterPro" id="IPR019744">
    <property type="entry name" value="APP_CUBD_CS"/>
</dbReference>
<dbReference type="InterPro" id="IPR036176">
    <property type="entry name" value="E2_sf"/>
</dbReference>
<dbReference type="PANTHER" id="PTHR23103">
    <property type="entry name" value="ALZHEIMER'S DISEASE BETA-AMYLOID RELATED"/>
    <property type="match status" value="1"/>
</dbReference>
<dbReference type="PANTHER" id="PTHR23103:SF15">
    <property type="entry name" value="AMYLOID-BETA-LIKE PROTEIN"/>
    <property type="match status" value="1"/>
</dbReference>
<dbReference type="Pfam" id="PF10515">
    <property type="entry name" value="APP_amyloid"/>
    <property type="match status" value="1"/>
</dbReference>
<dbReference type="Pfam" id="PF12924">
    <property type="entry name" value="APP_Cu_bd"/>
    <property type="match status" value="1"/>
</dbReference>
<dbReference type="Pfam" id="PF12925">
    <property type="entry name" value="APP_E2"/>
    <property type="match status" value="1"/>
</dbReference>
<dbReference type="Pfam" id="PF02177">
    <property type="entry name" value="APP_N"/>
    <property type="match status" value="1"/>
</dbReference>
<dbReference type="SMART" id="SM00006">
    <property type="entry name" value="A4_EXTRA"/>
    <property type="match status" value="1"/>
</dbReference>
<dbReference type="SUPFAM" id="SSF56491">
    <property type="entry name" value="A heparin-binding domain"/>
    <property type="match status" value="1"/>
</dbReference>
<dbReference type="SUPFAM" id="SSF89811">
    <property type="entry name" value="Amyloid beta a4 protein copper binding domain (domain 2)"/>
    <property type="match status" value="1"/>
</dbReference>
<dbReference type="SUPFAM" id="SSF109843">
    <property type="entry name" value="CAPPD, an extracellular domain of amyloid beta A4 protein"/>
    <property type="match status" value="1"/>
</dbReference>
<dbReference type="PROSITE" id="PS00319">
    <property type="entry name" value="APP_CUBD"/>
    <property type="match status" value="1"/>
</dbReference>
<dbReference type="PROSITE" id="PS51869">
    <property type="entry name" value="APP_E1"/>
    <property type="match status" value="1"/>
</dbReference>
<dbReference type="PROSITE" id="PS51870">
    <property type="entry name" value="APP_E2"/>
    <property type="match status" value="1"/>
</dbReference>
<dbReference type="PROSITE" id="PS00320">
    <property type="entry name" value="APP_INTRA"/>
    <property type="match status" value="1"/>
</dbReference>
<reference key="1">
    <citation type="journal article" date="1989" name="Proc. Natl. Acad. Sci. U.S.A.">
        <title>A Drosophila gene encoding a protein resembling the human beta-amyloid protein precursor.</title>
        <authorList>
            <person name="Rosen D.R."/>
            <person name="Martin-Morris L."/>
            <person name="Luo L."/>
            <person name="White K."/>
        </authorList>
    </citation>
    <scope>NUCLEOTIDE SEQUENCE [GENOMIC DNA]</scope>
    <scope>TISSUE SPECIFICITY</scope>
    <scope>DEVELOPMENTAL STAGE</scope>
</reference>
<reference key="2">
    <citation type="journal article" date="2000" name="Science">
        <title>The genome sequence of Drosophila melanogaster.</title>
        <authorList>
            <person name="Adams M.D."/>
            <person name="Celniker S.E."/>
            <person name="Holt R.A."/>
            <person name="Evans C.A."/>
            <person name="Gocayne J.D."/>
            <person name="Amanatides P.G."/>
            <person name="Scherer S.E."/>
            <person name="Li P.W."/>
            <person name="Hoskins R.A."/>
            <person name="Galle R.F."/>
            <person name="George R.A."/>
            <person name="Lewis S.E."/>
            <person name="Richards S."/>
            <person name="Ashburner M."/>
            <person name="Henderson S.N."/>
            <person name="Sutton G.G."/>
            <person name="Wortman J.R."/>
            <person name="Yandell M.D."/>
            <person name="Zhang Q."/>
            <person name="Chen L.X."/>
            <person name="Brandon R.C."/>
            <person name="Rogers Y.-H.C."/>
            <person name="Blazej R.G."/>
            <person name="Champe M."/>
            <person name="Pfeiffer B.D."/>
            <person name="Wan K.H."/>
            <person name="Doyle C."/>
            <person name="Baxter E.G."/>
            <person name="Helt G."/>
            <person name="Nelson C.R."/>
            <person name="Miklos G.L.G."/>
            <person name="Abril J.F."/>
            <person name="Agbayani A."/>
            <person name="An H.-J."/>
            <person name="Andrews-Pfannkoch C."/>
            <person name="Baldwin D."/>
            <person name="Ballew R.M."/>
            <person name="Basu A."/>
            <person name="Baxendale J."/>
            <person name="Bayraktaroglu L."/>
            <person name="Beasley E.M."/>
            <person name="Beeson K.Y."/>
            <person name="Benos P.V."/>
            <person name="Berman B.P."/>
            <person name="Bhandari D."/>
            <person name="Bolshakov S."/>
            <person name="Borkova D."/>
            <person name="Botchan M.R."/>
            <person name="Bouck J."/>
            <person name="Brokstein P."/>
            <person name="Brottier P."/>
            <person name="Burtis K.C."/>
            <person name="Busam D.A."/>
            <person name="Butler H."/>
            <person name="Cadieu E."/>
            <person name="Center A."/>
            <person name="Chandra I."/>
            <person name="Cherry J.M."/>
            <person name="Cawley S."/>
            <person name="Dahlke C."/>
            <person name="Davenport L.B."/>
            <person name="Davies P."/>
            <person name="de Pablos B."/>
            <person name="Delcher A."/>
            <person name="Deng Z."/>
            <person name="Mays A.D."/>
            <person name="Dew I."/>
            <person name="Dietz S.M."/>
            <person name="Dodson K."/>
            <person name="Doup L.E."/>
            <person name="Downes M."/>
            <person name="Dugan-Rocha S."/>
            <person name="Dunkov B.C."/>
            <person name="Dunn P."/>
            <person name="Durbin K.J."/>
            <person name="Evangelista C.C."/>
            <person name="Ferraz C."/>
            <person name="Ferriera S."/>
            <person name="Fleischmann W."/>
            <person name="Fosler C."/>
            <person name="Gabrielian A.E."/>
            <person name="Garg N.S."/>
            <person name="Gelbart W.M."/>
            <person name="Glasser K."/>
            <person name="Glodek A."/>
            <person name="Gong F."/>
            <person name="Gorrell J.H."/>
            <person name="Gu Z."/>
            <person name="Guan P."/>
            <person name="Harris M."/>
            <person name="Harris N.L."/>
            <person name="Harvey D.A."/>
            <person name="Heiman T.J."/>
            <person name="Hernandez J.R."/>
            <person name="Houck J."/>
            <person name="Hostin D."/>
            <person name="Houston K.A."/>
            <person name="Howland T.J."/>
            <person name="Wei M.-H."/>
            <person name="Ibegwam C."/>
            <person name="Jalali M."/>
            <person name="Kalush F."/>
            <person name="Karpen G.H."/>
            <person name="Ke Z."/>
            <person name="Kennison J.A."/>
            <person name="Ketchum K.A."/>
            <person name="Kimmel B.E."/>
            <person name="Kodira C.D."/>
            <person name="Kraft C.L."/>
            <person name="Kravitz S."/>
            <person name="Kulp D."/>
            <person name="Lai Z."/>
            <person name="Lasko P."/>
            <person name="Lei Y."/>
            <person name="Levitsky A.A."/>
            <person name="Li J.H."/>
            <person name="Li Z."/>
            <person name="Liang Y."/>
            <person name="Lin X."/>
            <person name="Liu X."/>
            <person name="Mattei B."/>
            <person name="McIntosh T.C."/>
            <person name="McLeod M.P."/>
            <person name="McPherson D."/>
            <person name="Merkulov G."/>
            <person name="Milshina N.V."/>
            <person name="Mobarry C."/>
            <person name="Morris J."/>
            <person name="Moshrefi A."/>
            <person name="Mount S.M."/>
            <person name="Moy M."/>
            <person name="Murphy B."/>
            <person name="Murphy L."/>
            <person name="Muzny D.M."/>
            <person name="Nelson D.L."/>
            <person name="Nelson D.R."/>
            <person name="Nelson K.A."/>
            <person name="Nixon K."/>
            <person name="Nusskern D.R."/>
            <person name="Pacleb J.M."/>
            <person name="Palazzolo M."/>
            <person name="Pittman G.S."/>
            <person name="Pan S."/>
            <person name="Pollard J."/>
            <person name="Puri V."/>
            <person name="Reese M.G."/>
            <person name="Reinert K."/>
            <person name="Remington K."/>
            <person name="Saunders R.D.C."/>
            <person name="Scheeler F."/>
            <person name="Shen H."/>
            <person name="Shue B.C."/>
            <person name="Siden-Kiamos I."/>
            <person name="Simpson M."/>
            <person name="Skupski M.P."/>
            <person name="Smith T.J."/>
            <person name="Spier E."/>
            <person name="Spradling A.C."/>
            <person name="Stapleton M."/>
            <person name="Strong R."/>
            <person name="Sun E."/>
            <person name="Svirskas R."/>
            <person name="Tector C."/>
            <person name="Turner R."/>
            <person name="Venter E."/>
            <person name="Wang A.H."/>
            <person name="Wang X."/>
            <person name="Wang Z.-Y."/>
            <person name="Wassarman D.A."/>
            <person name="Weinstock G.M."/>
            <person name="Weissenbach J."/>
            <person name="Williams S.M."/>
            <person name="Woodage T."/>
            <person name="Worley K.C."/>
            <person name="Wu D."/>
            <person name="Yang S."/>
            <person name="Yao Q.A."/>
            <person name="Ye J."/>
            <person name="Yeh R.-F."/>
            <person name="Zaveri J.S."/>
            <person name="Zhan M."/>
            <person name="Zhang G."/>
            <person name="Zhao Q."/>
            <person name="Zheng L."/>
            <person name="Zheng X.H."/>
            <person name="Zhong F.N."/>
            <person name="Zhong W."/>
            <person name="Zhou X."/>
            <person name="Zhu S.C."/>
            <person name="Zhu X."/>
            <person name="Smith H.O."/>
            <person name="Gibbs R.A."/>
            <person name="Myers E.W."/>
            <person name="Rubin G.M."/>
            <person name="Venter J.C."/>
        </authorList>
    </citation>
    <scope>NUCLEOTIDE SEQUENCE [LARGE SCALE GENOMIC DNA]</scope>
    <source>
        <strain>Berkeley</strain>
    </source>
</reference>
<reference key="3">
    <citation type="journal article" date="2002" name="Genome Biol.">
        <title>Annotation of the Drosophila melanogaster euchromatic genome: a systematic review.</title>
        <authorList>
            <person name="Misra S."/>
            <person name="Crosby M.A."/>
            <person name="Mungall C.J."/>
            <person name="Matthews B.B."/>
            <person name="Campbell K.S."/>
            <person name="Hradecky P."/>
            <person name="Huang Y."/>
            <person name="Kaminker J.S."/>
            <person name="Millburn G.H."/>
            <person name="Prochnik S.E."/>
            <person name="Smith C.D."/>
            <person name="Tupy J.L."/>
            <person name="Whitfield E.J."/>
            <person name="Bayraktaroglu L."/>
            <person name="Berman B.P."/>
            <person name="Bettencourt B.R."/>
            <person name="Celniker S.E."/>
            <person name="de Grey A.D.N.J."/>
            <person name="Drysdale R.A."/>
            <person name="Harris N.L."/>
            <person name="Richter J."/>
            <person name="Russo S."/>
            <person name="Schroeder A.J."/>
            <person name="Shu S.Q."/>
            <person name="Stapleton M."/>
            <person name="Yamada C."/>
            <person name="Ashburner M."/>
            <person name="Gelbart W.M."/>
            <person name="Rubin G.M."/>
            <person name="Lewis S.E."/>
        </authorList>
    </citation>
    <scope>GENOME REANNOTATION</scope>
    <source>
        <strain>Berkeley</strain>
    </source>
</reference>
<reference key="4">
    <citation type="journal article" date="2000" name="Science">
        <title>From sequence to chromosome: the tip of the X chromosome of D. melanogaster.</title>
        <authorList>
            <person name="Benos P.V."/>
            <person name="Gatt M.K."/>
            <person name="Ashburner M."/>
            <person name="Murphy L."/>
            <person name="Harris D."/>
            <person name="Barrell B.G."/>
            <person name="Ferraz C."/>
            <person name="Vidal S."/>
            <person name="Brun C."/>
            <person name="Demailles J."/>
            <person name="Cadieu E."/>
            <person name="Dreano S."/>
            <person name="Gloux S."/>
            <person name="Lelaure V."/>
            <person name="Mottier S."/>
            <person name="Galibert F."/>
            <person name="Borkova D."/>
            <person name="Minana B."/>
            <person name="Kafatos F.C."/>
            <person name="Louis C."/>
            <person name="Siden-Kiamos I."/>
            <person name="Bolshakov S."/>
            <person name="Papagiannakis G."/>
            <person name="Spanos L."/>
            <person name="Cox S."/>
            <person name="Madueno E."/>
            <person name="de Pablos B."/>
            <person name="Modolell J."/>
            <person name="Peter A."/>
            <person name="Schoettler P."/>
            <person name="Werner M."/>
            <person name="Mourkioti F."/>
            <person name="Beinert N."/>
            <person name="Dowe G."/>
            <person name="Schaefer U."/>
            <person name="Jaeckle H."/>
            <person name="Bucheton A."/>
            <person name="Callister D.M."/>
            <person name="Campbell L.A."/>
            <person name="Darlamitsou A."/>
            <person name="Henderson N.S."/>
            <person name="McMillan P.J."/>
            <person name="Salles C."/>
            <person name="Tait E.A."/>
            <person name="Valenti P."/>
            <person name="Saunders R.D.C."/>
            <person name="Glover D.M."/>
        </authorList>
    </citation>
    <scope>NUCLEOTIDE SEQUENCE [LARGE SCALE GENOMIC DNA]</scope>
    <source>
        <strain>Oregon-R</strain>
    </source>
</reference>
<reference key="5">
    <citation type="journal article" date="2000" name="Science">
        <title>A Drosophila complementary DNA resource.</title>
        <authorList>
            <person name="Rubin G.M."/>
            <person name="Hong L."/>
            <person name="Brokstein P."/>
            <person name="Evans-Holm M."/>
            <person name="Frise E."/>
            <person name="Stapleton M."/>
            <person name="Harvey D.A."/>
        </authorList>
    </citation>
    <scope>NUCLEOTIDE SEQUENCE [LARGE SCALE MRNA]</scope>
    <source>
        <strain>Berkeley</strain>
        <tissue>Ovary</tissue>
    </source>
</reference>
<reference key="6">
    <citation type="journal article" date="1990" name="Development">
        <title>The Drosophila transcript encoded by the beta-amyloid protein precursor-like gene is restricted to the nervous system.</title>
        <authorList>
            <person name="Martin-Morris L.E."/>
            <person name="White K."/>
        </authorList>
    </citation>
    <scope>NUCLEOTIDE SEQUENCE [GENOMIC DNA] OF 1-83</scope>
    <scope>TISSUE SPECIFICITY</scope>
    <scope>DEVELOPMENTAL STAGE</scope>
</reference>
<reference key="7">
    <citation type="journal article" date="2007" name="Cell Death Differ.">
        <title>Drosophila homolog of APP-BP1 (dAPP-BP1) interacts antagonistically with APPL during Drosophila development.</title>
        <authorList>
            <person name="Kim H.J."/>
            <person name="Kim S.H."/>
            <person name="Shim S.O."/>
            <person name="Park E."/>
            <person name="Kim C."/>
            <person name="Kim K."/>
            <person name="Tanouye M.A."/>
            <person name="Yim J."/>
        </authorList>
    </citation>
    <scope>FUNCTION</scope>
    <scope>INTERACTION WITH APP-BP1</scope>
    <scope>DISRUPTION PHENOTYPE</scope>
</reference>
<keyword id="KW-0034">Amyloid</keyword>
<keyword id="KW-0217">Developmental protein</keyword>
<keyword id="KW-0221">Differentiation</keyword>
<keyword id="KW-1015">Disulfide bond</keyword>
<keyword id="KW-0325">Glycoprotein</keyword>
<keyword id="KW-0472">Membrane</keyword>
<keyword id="KW-0524">Neurogenesis</keyword>
<keyword id="KW-1185">Reference proteome</keyword>
<keyword id="KW-0732">Signal</keyword>
<keyword id="KW-0812">Transmembrane</keyword>
<keyword id="KW-1133">Transmembrane helix</keyword>
<comment type="function">
    <text evidence="7">During development, plays a role in the regulation of the neddylation pathway. Appl and APP-BP1 interact antagonistically during development.</text>
</comment>
<comment type="subunit">
    <text evidence="7">Interacts (via the intracellular domain, ICD) with APP-BP1.</text>
</comment>
<comment type="interaction">
    <interactant intactId="EBI-74135">
        <id>P14599</id>
    </interactant>
    <interactant intactId="EBI-74120">
        <id>Q9W0K0</id>
        <label>Aplip1</label>
    </interactant>
    <organismsDiffer>false</organismsDiffer>
    <experiments>6</experiments>
</comment>
<comment type="interaction">
    <interactant intactId="EBI-74135">
        <id>P14599</id>
    </interactant>
    <interactant intactId="EBI-868243">
        <id>P34082</id>
        <label>Fas2</label>
    </interactant>
    <organismsDiffer>false</organismsDiffer>
    <experiments>3</experiments>
</comment>
<comment type="interaction">
    <interactant intactId="EBI-74135">
        <id>P14599</id>
    </interactant>
    <interactant intactId="EBI-2027617">
        <id>Q9GQQ6</id>
        <label>X11L</label>
    </interactant>
    <organismsDiffer>false</organismsDiffer>
    <experiments>3</experiments>
</comment>
<comment type="interaction">
    <interactant intactId="EBI-74135">
        <id>P14599</id>
    </interactant>
    <interactant intactId="EBI-74153">
        <id>Q9VX41</id>
        <label>X11L</label>
    </interactant>
    <organismsDiffer>false</organismsDiffer>
    <experiments>3</experiments>
</comment>
<comment type="interaction">
    <interactant intactId="EBI-74135">
        <id>P14599</id>
    </interactant>
    <interactant intactId="EBI-74576">
        <id>Q9ERE9</id>
        <label>Mapk8ip2</label>
    </interactant>
    <organismsDiffer>true</organismsDiffer>
    <experiments>2</experiments>
</comment>
<comment type="subcellular location">
    <subcellularLocation>
        <location>Membrane</location>
        <topology>Single-pass type I membrane protein</topology>
    </subcellularLocation>
</comment>
<comment type="tissue specificity">
    <text evidence="8 9">Expressed in postmitotic neurons in the central and peripheral nervous systems. Within the nervous system, transcripts are not observed in neuroblasts, newly generated neurons and at least one class of presumed glial cells.</text>
</comment>
<comment type="developmental stage">
    <text evidence="8 9">Expressed in all developmental stages.</text>
</comment>
<comment type="domain">
    <text evidence="1 3">The NPTY motif mediates the interaction with clathrin (By similarity). The clathrin-binding site is essential for its association with X11-alpha, -beta, and -gamma. The sequence specific recognition extends to peptide residues that are C-terminal to the NPXY motif. This interaction appears to be independent of phosphorylation (By similarity).</text>
</comment>
<comment type="disruption phenotype">
    <text evidence="7">Overexpression inhibits the Nedd8 conjugation pathway, disrupts the normal bristle pattern in the fly thorax, and induces apoptosis in wing imaginal disks.</text>
</comment>
<comment type="similarity">
    <text evidence="4">Belongs to the APP family.</text>
</comment>
<comment type="caution">
    <text evidence="11 12">Was originally (PubMed:2494667) thought to be vnd but further analysis (PubMed:2127912) has clearly shown that it corresponds to Appl.</text>
</comment>
<evidence type="ECO:0000250" key="1"/>
<evidence type="ECO:0000250" key="2">
    <source>
        <dbReference type="UniProtKB" id="P05067"/>
    </source>
</evidence>
<evidence type="ECO:0000255" key="3"/>
<evidence type="ECO:0000255" key="4">
    <source>
        <dbReference type="PROSITE-ProRule" id="PRU01217"/>
    </source>
</evidence>
<evidence type="ECO:0000255" key="5">
    <source>
        <dbReference type="PROSITE-ProRule" id="PRU01218"/>
    </source>
</evidence>
<evidence type="ECO:0000256" key="6">
    <source>
        <dbReference type="SAM" id="MobiDB-lite"/>
    </source>
</evidence>
<evidence type="ECO:0000269" key="7">
    <source>
    </source>
</evidence>
<evidence type="ECO:0000269" key="8">
    <source>
    </source>
</evidence>
<evidence type="ECO:0000269" key="9">
    <source>
    </source>
</evidence>
<evidence type="ECO:0000305" key="10"/>
<evidence type="ECO:0000305" key="11">
    <source>
    </source>
</evidence>
<evidence type="ECO:0000305" key="12">
    <source>
    </source>
</evidence>
<feature type="signal peptide" evidence="3">
    <location>
        <begin position="1"/>
        <end position="27"/>
    </location>
</feature>
<feature type="chain" id="PRO_0000000202" description="Amyloid-beta-like protein">
    <location>
        <begin position="28"/>
        <end position="887"/>
    </location>
</feature>
<feature type="topological domain" description="Extracellular" evidence="3">
    <location>
        <begin position="28"/>
        <end position="813"/>
    </location>
</feature>
<feature type="transmembrane region" description="Helical" evidence="3">
    <location>
        <begin position="814"/>
        <end position="834"/>
    </location>
</feature>
<feature type="topological domain" description="Cytoplasmic" evidence="3">
    <location>
        <begin position="835"/>
        <end position="887"/>
    </location>
</feature>
<feature type="domain" description="E1" evidence="4">
    <location>
        <begin position="30"/>
        <end position="199"/>
    </location>
</feature>
<feature type="domain" description="E2" evidence="5">
    <location>
        <begin position="395"/>
        <end position="597"/>
    </location>
</feature>
<feature type="region of interest" description="GFLD subdomain" evidence="4">
    <location>
        <begin position="30"/>
        <end position="133"/>
    </location>
</feature>
<feature type="region of interest" description="CuBD subdomain" evidence="4">
    <location>
        <begin position="141"/>
        <end position="199"/>
    </location>
</feature>
<feature type="region of interest" description="Disordered" evidence="6">
    <location>
        <begin position="225"/>
        <end position="365"/>
    </location>
</feature>
<feature type="region of interest" description="Disordered" evidence="6">
    <location>
        <begin position="377"/>
        <end position="396"/>
    </location>
</feature>
<feature type="region of interest" description="Disordered" evidence="6">
    <location>
        <begin position="675"/>
        <end position="743"/>
    </location>
</feature>
<feature type="short sequence motif" description="YENPXY motif" evidence="2">
    <location>
        <begin position="875"/>
        <end position="880"/>
    </location>
</feature>
<feature type="compositionally biased region" description="Acidic residues" evidence="6">
    <location>
        <begin position="246"/>
        <end position="267"/>
    </location>
</feature>
<feature type="compositionally biased region" description="Low complexity" evidence="6">
    <location>
        <begin position="268"/>
        <end position="292"/>
    </location>
</feature>
<feature type="compositionally biased region" description="Acidic residues" evidence="6">
    <location>
        <begin position="293"/>
        <end position="321"/>
    </location>
</feature>
<feature type="compositionally biased region" description="Low complexity" evidence="6">
    <location>
        <begin position="329"/>
        <end position="352"/>
    </location>
</feature>
<feature type="compositionally biased region" description="Low complexity" evidence="6">
    <location>
        <begin position="681"/>
        <end position="699"/>
    </location>
</feature>
<feature type="glycosylation site" description="N-linked (GlcNAc...) asparagine" evidence="3">
    <location>
        <position position="150"/>
    </location>
</feature>
<feature type="glycosylation site" description="N-linked (GlcNAc...) asparagine" evidence="3">
    <location>
        <position position="161"/>
    </location>
</feature>
<feature type="glycosylation site" description="N-linked (GlcNAc...) asparagine" evidence="3">
    <location>
        <position position="237"/>
    </location>
</feature>
<feature type="glycosylation site" description="N-linked (GlcNAc...) asparagine" evidence="3">
    <location>
        <position position="240"/>
    </location>
</feature>
<feature type="glycosylation site" description="N-linked (GlcNAc...) asparagine" evidence="3">
    <location>
        <position position="574"/>
    </location>
</feature>
<feature type="disulfide bond" evidence="4">
    <location>
        <begin position="40"/>
        <end position="70"/>
    </location>
</feature>
<feature type="disulfide bond" evidence="4">
    <location>
        <begin position="81"/>
        <end position="128"/>
    </location>
</feature>
<feature type="disulfide bond" evidence="4">
    <location>
        <begin position="106"/>
        <end position="116"/>
    </location>
</feature>
<feature type="disulfide bond" evidence="4">
    <location>
        <begin position="143"/>
        <end position="197"/>
    </location>
</feature>
<feature type="disulfide bond" evidence="4">
    <location>
        <begin position="154"/>
        <end position="184"/>
    </location>
</feature>
<feature type="disulfide bond" evidence="4">
    <location>
        <begin position="168"/>
        <end position="196"/>
    </location>
</feature>
<feature type="sequence conflict" description="In Ref. 1; AAA28874." evidence="10" ref="1">
    <original>S</original>
    <variation>T</variation>
    <location>
        <position position="177"/>
    </location>
</feature>
<feature type="sequence conflict" description="In Ref. 1; AAA28874." evidence="10" ref="1">
    <location>
        <position position="229"/>
    </location>
</feature>
<feature type="sequence conflict" description="In Ref. 4; CAA21409/CAA18093." evidence="10" ref="4">
    <original>V</original>
    <variation>M</variation>
    <location>
        <position position="332"/>
    </location>
</feature>
<feature type="sequence conflict" description="In Ref. 1; AAA28874." evidence="10" ref="1">
    <original>S</original>
    <variation>T</variation>
    <location>
        <position position="743"/>
    </location>
</feature>
<gene>
    <name type="primary">Appl</name>
    <name type="ORF">CG7727</name>
</gene>
<proteinExistence type="evidence at protein level"/>